<dbReference type="EMBL" id="AE016826">
    <property type="protein sequence ID" value="AAO27232.1"/>
    <property type="molecule type" value="Genomic_DNA"/>
</dbReference>
<dbReference type="RefSeq" id="WP_011091633.1">
    <property type="nucleotide sequence ID" value="NC_004545.1"/>
</dbReference>
<dbReference type="SMR" id="Q89A25"/>
<dbReference type="STRING" id="224915.bbp_530"/>
<dbReference type="KEGG" id="bab:bbp_530"/>
<dbReference type="eggNOG" id="COG0589">
    <property type="taxonomic scope" value="Bacteria"/>
</dbReference>
<dbReference type="HOGENOM" id="CLU_049301_18_0_6"/>
<dbReference type="OrthoDB" id="9792500at2"/>
<dbReference type="Proteomes" id="UP000000601">
    <property type="component" value="Chromosome"/>
</dbReference>
<dbReference type="GO" id="GO:0005737">
    <property type="term" value="C:cytoplasm"/>
    <property type="evidence" value="ECO:0007669"/>
    <property type="project" value="UniProtKB-SubCell"/>
</dbReference>
<dbReference type="CDD" id="cd23657">
    <property type="entry name" value="USP-A-like"/>
    <property type="match status" value="1"/>
</dbReference>
<dbReference type="Gene3D" id="3.40.50.620">
    <property type="entry name" value="HUPs"/>
    <property type="match status" value="1"/>
</dbReference>
<dbReference type="InterPro" id="IPR014729">
    <property type="entry name" value="Rossmann-like_a/b/a_fold"/>
</dbReference>
<dbReference type="InterPro" id="IPR006015">
    <property type="entry name" value="Universal_stress_UspA"/>
</dbReference>
<dbReference type="InterPro" id="IPR006016">
    <property type="entry name" value="UspA"/>
</dbReference>
<dbReference type="Pfam" id="PF00582">
    <property type="entry name" value="Usp"/>
    <property type="match status" value="1"/>
</dbReference>
<dbReference type="PIRSF" id="PIRSF006276">
    <property type="entry name" value="UspA"/>
    <property type="match status" value="1"/>
</dbReference>
<dbReference type="SUPFAM" id="SSF52402">
    <property type="entry name" value="Adenine nucleotide alpha hydrolases-like"/>
    <property type="match status" value="1"/>
</dbReference>
<organism>
    <name type="scientific">Buchnera aphidicola subsp. Baizongia pistaciae (strain Bp)</name>
    <dbReference type="NCBI Taxonomy" id="224915"/>
    <lineage>
        <taxon>Bacteria</taxon>
        <taxon>Pseudomonadati</taxon>
        <taxon>Pseudomonadota</taxon>
        <taxon>Gammaproteobacteria</taxon>
        <taxon>Enterobacterales</taxon>
        <taxon>Erwiniaceae</taxon>
        <taxon>Buchnera</taxon>
    </lineage>
</organism>
<feature type="chain" id="PRO_0000147395" description="Universal stress protein A">
    <location>
        <begin position="1"/>
        <end position="142"/>
    </location>
</feature>
<name>USPA_BUCBP</name>
<evidence type="ECO:0000250" key="1"/>
<evidence type="ECO:0000305" key="2"/>
<accession>Q89A25</accession>
<keyword id="KW-0963">Cytoplasm</keyword>
<keyword id="KW-1185">Reference proteome</keyword>
<proteinExistence type="inferred from homology"/>
<sequence length="142" mass="16706">MMNYRHILVMIDLSPDSYSLIHKASFISNLHNDAKISLIYVNTDYSDAYTGLIDVDIRNIQSYRLQDINNMLKNLKNYIYFPVHKVFIGNGDMTSCLLDVTQKYNIDLIIFGHYQDFWSKIVFSLRQIINSLHIDMLIVPFY</sequence>
<comment type="function">
    <text evidence="1">Required for resistance to DNA-damaging agents.</text>
</comment>
<comment type="subunit">
    <text evidence="1">Homodimer.</text>
</comment>
<comment type="subcellular location">
    <subcellularLocation>
        <location evidence="1">Cytoplasm</location>
    </subcellularLocation>
</comment>
<comment type="similarity">
    <text evidence="2">Belongs to the universal stress protein A family.</text>
</comment>
<reference key="1">
    <citation type="journal article" date="2003" name="Proc. Natl. Acad. Sci. U.S.A.">
        <title>Reductive genome evolution in Buchnera aphidicola.</title>
        <authorList>
            <person name="van Ham R.C.H.J."/>
            <person name="Kamerbeek J."/>
            <person name="Palacios C."/>
            <person name="Rausell C."/>
            <person name="Abascal F."/>
            <person name="Bastolla U."/>
            <person name="Fernandez J.M."/>
            <person name="Jimenez L."/>
            <person name="Postigo M."/>
            <person name="Silva F.J."/>
            <person name="Tamames J."/>
            <person name="Viguera E."/>
            <person name="Latorre A."/>
            <person name="Valencia A."/>
            <person name="Moran F."/>
            <person name="Moya A."/>
        </authorList>
    </citation>
    <scope>NUCLEOTIDE SEQUENCE [LARGE SCALE GENOMIC DNA]</scope>
    <source>
        <strain>Bp</strain>
    </source>
</reference>
<gene>
    <name type="primary">uspA</name>
    <name type="ordered locus">bbp_530</name>
</gene>
<protein>
    <recommendedName>
        <fullName>Universal stress protein A</fullName>
    </recommendedName>
</protein>